<reference key="1">
    <citation type="journal article" date="2000" name="Nature">
        <title>Sequence and analysis of chromosome 1 of the plant Arabidopsis thaliana.</title>
        <authorList>
            <person name="Theologis A."/>
            <person name="Ecker J.R."/>
            <person name="Palm C.J."/>
            <person name="Federspiel N.A."/>
            <person name="Kaul S."/>
            <person name="White O."/>
            <person name="Alonso J."/>
            <person name="Altafi H."/>
            <person name="Araujo R."/>
            <person name="Bowman C.L."/>
            <person name="Brooks S.Y."/>
            <person name="Buehler E."/>
            <person name="Chan A."/>
            <person name="Chao Q."/>
            <person name="Chen H."/>
            <person name="Cheuk R.F."/>
            <person name="Chin C.W."/>
            <person name="Chung M.K."/>
            <person name="Conn L."/>
            <person name="Conway A.B."/>
            <person name="Conway A.R."/>
            <person name="Creasy T.H."/>
            <person name="Dewar K."/>
            <person name="Dunn P."/>
            <person name="Etgu P."/>
            <person name="Feldblyum T.V."/>
            <person name="Feng J.-D."/>
            <person name="Fong B."/>
            <person name="Fujii C.Y."/>
            <person name="Gill J.E."/>
            <person name="Goldsmith A.D."/>
            <person name="Haas B."/>
            <person name="Hansen N.F."/>
            <person name="Hughes B."/>
            <person name="Huizar L."/>
            <person name="Hunter J.L."/>
            <person name="Jenkins J."/>
            <person name="Johnson-Hopson C."/>
            <person name="Khan S."/>
            <person name="Khaykin E."/>
            <person name="Kim C.J."/>
            <person name="Koo H.L."/>
            <person name="Kremenetskaia I."/>
            <person name="Kurtz D.B."/>
            <person name="Kwan A."/>
            <person name="Lam B."/>
            <person name="Langin-Hooper S."/>
            <person name="Lee A."/>
            <person name="Lee J.M."/>
            <person name="Lenz C.A."/>
            <person name="Li J.H."/>
            <person name="Li Y.-P."/>
            <person name="Lin X."/>
            <person name="Liu S.X."/>
            <person name="Liu Z.A."/>
            <person name="Luros J.S."/>
            <person name="Maiti R."/>
            <person name="Marziali A."/>
            <person name="Militscher J."/>
            <person name="Miranda M."/>
            <person name="Nguyen M."/>
            <person name="Nierman W.C."/>
            <person name="Osborne B.I."/>
            <person name="Pai G."/>
            <person name="Peterson J."/>
            <person name="Pham P.K."/>
            <person name="Rizzo M."/>
            <person name="Rooney T."/>
            <person name="Rowley D."/>
            <person name="Sakano H."/>
            <person name="Salzberg S.L."/>
            <person name="Schwartz J.R."/>
            <person name="Shinn P."/>
            <person name="Southwick A.M."/>
            <person name="Sun H."/>
            <person name="Tallon L.J."/>
            <person name="Tambunga G."/>
            <person name="Toriumi M.J."/>
            <person name="Town C.D."/>
            <person name="Utterback T."/>
            <person name="Van Aken S."/>
            <person name="Vaysberg M."/>
            <person name="Vysotskaia V.S."/>
            <person name="Walker M."/>
            <person name="Wu D."/>
            <person name="Yu G."/>
            <person name="Fraser C.M."/>
            <person name="Venter J.C."/>
            <person name="Davis R.W."/>
        </authorList>
    </citation>
    <scope>NUCLEOTIDE SEQUENCE [LARGE SCALE GENOMIC DNA]</scope>
    <source>
        <strain>cv. Columbia</strain>
    </source>
</reference>
<reference key="2">
    <citation type="journal article" date="2017" name="Plant J.">
        <title>Araport11: a complete reannotation of the Arabidopsis thaliana reference genome.</title>
        <authorList>
            <person name="Cheng C.Y."/>
            <person name="Krishnakumar V."/>
            <person name="Chan A.P."/>
            <person name="Thibaud-Nissen F."/>
            <person name="Schobel S."/>
            <person name="Town C.D."/>
        </authorList>
    </citation>
    <scope>GENOME REANNOTATION</scope>
    <source>
        <strain>cv. Columbia</strain>
    </source>
</reference>
<reference key="3">
    <citation type="journal article" date="2003" name="Science">
        <title>Empirical analysis of transcriptional activity in the Arabidopsis genome.</title>
        <authorList>
            <person name="Yamada K."/>
            <person name="Lim J."/>
            <person name="Dale J.M."/>
            <person name="Chen H."/>
            <person name="Shinn P."/>
            <person name="Palm C.J."/>
            <person name="Southwick A.M."/>
            <person name="Wu H.C."/>
            <person name="Kim C.J."/>
            <person name="Nguyen M."/>
            <person name="Pham P.K."/>
            <person name="Cheuk R.F."/>
            <person name="Karlin-Newmann G."/>
            <person name="Liu S.X."/>
            <person name="Lam B."/>
            <person name="Sakano H."/>
            <person name="Wu T."/>
            <person name="Yu G."/>
            <person name="Miranda M."/>
            <person name="Quach H.L."/>
            <person name="Tripp M."/>
            <person name="Chang C.H."/>
            <person name="Lee J.M."/>
            <person name="Toriumi M.J."/>
            <person name="Chan M.M."/>
            <person name="Tang C.C."/>
            <person name="Onodera C.S."/>
            <person name="Deng J.M."/>
            <person name="Akiyama K."/>
            <person name="Ansari Y."/>
            <person name="Arakawa T."/>
            <person name="Banh J."/>
            <person name="Banno F."/>
            <person name="Bowser L."/>
            <person name="Brooks S.Y."/>
            <person name="Carninci P."/>
            <person name="Chao Q."/>
            <person name="Choy N."/>
            <person name="Enju A."/>
            <person name="Goldsmith A.D."/>
            <person name="Gurjal M."/>
            <person name="Hansen N.F."/>
            <person name="Hayashizaki Y."/>
            <person name="Johnson-Hopson C."/>
            <person name="Hsuan V.W."/>
            <person name="Iida K."/>
            <person name="Karnes M."/>
            <person name="Khan S."/>
            <person name="Koesema E."/>
            <person name="Ishida J."/>
            <person name="Jiang P.X."/>
            <person name="Jones T."/>
            <person name="Kawai J."/>
            <person name="Kamiya A."/>
            <person name="Meyers C."/>
            <person name="Nakajima M."/>
            <person name="Narusaka M."/>
            <person name="Seki M."/>
            <person name="Sakurai T."/>
            <person name="Satou M."/>
            <person name="Tamse R."/>
            <person name="Vaysberg M."/>
            <person name="Wallender E.K."/>
            <person name="Wong C."/>
            <person name="Yamamura Y."/>
            <person name="Yuan S."/>
            <person name="Shinozaki K."/>
            <person name="Davis R.W."/>
            <person name="Theologis A."/>
            <person name="Ecker J.R."/>
        </authorList>
    </citation>
    <scope>NUCLEOTIDE SEQUENCE [LARGE SCALE MRNA]</scope>
    <source>
        <strain>cv. Columbia</strain>
    </source>
</reference>
<reference key="4">
    <citation type="journal article" date="2007" name="Genetics">
        <title>The genetic architecture of shoot branching in Arabidopsis thaliana: a comparative assessment of candidate gene associations vs. quantitative trait locus mapping.</title>
        <authorList>
            <person name="Ehrenreich I.M."/>
            <person name="Stafford P.A."/>
            <person name="Purugganan M.D."/>
        </authorList>
    </citation>
    <scope>NUCLEOTIDE SEQUENCE [GENOMIC DNA] OF 1-247</scope>
    <scope>VARIANTS</scope>
    <source>
        <strain>cv. Ag-0</strain>
        <strain>cv. An-1</strain>
        <strain>cv. Br-0</strain>
        <strain>cv. C24</strain>
        <strain>cv. Ct-1</strain>
        <strain>cv. Cvi-1</strain>
        <strain>cv. Edi-0</strain>
        <strain>cv. Ga-0</strain>
        <strain>cv. Kas-1</strain>
        <strain>cv. Kin-0</strain>
        <strain>cv. Landsberg erecta</strain>
        <strain>cv. Ll-0</strain>
        <strain>cv. Lz-0</strain>
        <strain>cv. Ms-0</strain>
        <strain>cv. Mt-0</strain>
        <strain>cv. Nd-1</strain>
        <strain>cv. Nok-3</strain>
        <strain>cv. Oy-0</strain>
        <strain>cv. Se-0</strain>
        <strain>cv. Sorbo</strain>
        <strain>cv. Tsu-1</strain>
        <strain>cv. Van-0</strain>
        <strain>cv. Wa-1</strain>
        <strain>cv. Wassilewskija</strain>
    </source>
</reference>
<reference key="5">
    <citation type="journal article" date="2001" name="Plant Cell">
        <title>Bus, a bushy Arabidopsis CYP79F1 knockout mutant with abolished synthesis of short-chain aliphatic glucosinolates.</title>
        <authorList>
            <person name="Reintanz B."/>
            <person name="Lehnen M."/>
            <person name="Reichelt M."/>
            <person name="Gershenzon J."/>
            <person name="Kowalczyk M."/>
            <person name="Sandberg G."/>
            <person name="Godde M."/>
            <person name="Uhl R."/>
            <person name="Palme K."/>
        </authorList>
    </citation>
    <scope>IDENTIFICATION</scope>
    <scope>FUNCTION</scope>
    <scope>TISSUE SPECIFICITY</scope>
    <scope>SUBCELLULAR LOCATION</scope>
    <scope>DISRUPTION PHENOTYPE</scope>
    <source>
        <strain>cv. Columbia</strain>
    </source>
</reference>
<reference key="6">
    <citation type="journal article" date="2001" name="J. Biol. Chem.">
        <title>Cytochrome P450 CYP79F1 from Arabidopsis catalyzes the conversion of dihomomethionine and trihomomethionine to the corresponding aldoximes in the biosynthesis of aliphatic glucosinolates.</title>
        <authorList>
            <person name="Hansen C.H."/>
            <person name="Wittstock U."/>
            <person name="Olsen C.-E."/>
            <person name="Hick A.J."/>
            <person name="Pickett J.A."/>
            <person name="Halkier B.A."/>
        </authorList>
    </citation>
    <scope>FUNCTION</scope>
    <scope>CATALYTIC ACTIVITY</scope>
    <scope>TISSUE SPECIFICITY</scope>
</reference>
<reference key="7">
    <citation type="journal article" date="2003" name="Plant J.">
        <title>CYP79F1 and CYP79F2 have distinct functions in the biosynthesis of aliphatic glucosinolates in Arabidopsis.</title>
        <authorList>
            <person name="Chen S."/>
            <person name="Glawischnig E."/>
            <person name="Joergensen K."/>
            <person name="Naur P."/>
            <person name="Joergensen B."/>
            <person name="Olsen C.-E."/>
            <person name="Hansen C.H."/>
            <person name="Rasmussen H."/>
            <person name="Pickett J.A."/>
            <person name="Halkier B.A."/>
        </authorList>
    </citation>
    <scope>CATALYTIC ACTIVITY</scope>
    <scope>BIOPHYSICOCHEMICAL PROPERTIES</scope>
    <scope>TISSUE SPECIFICITY</scope>
    <scope>DISRUPTION PHENOTYPE</scope>
</reference>
<reference key="8">
    <citation type="journal article" date="2003" name="Plant Physiol.">
        <title>Modulation of CYP79 genes and glucosinolate profiles in Arabidopsis by defense signaling pathways.</title>
        <authorList>
            <person name="Mikkelsen M.D."/>
            <person name="Petersen B.L."/>
            <person name="Glawischnig E."/>
            <person name="Jensen A.B."/>
            <person name="Andreasson E."/>
            <person name="Halkier B.A."/>
        </authorList>
    </citation>
    <scope>INDUCTION BY METHYL JASMONATE</scope>
</reference>
<reference key="9">
    <citation type="journal article" date="2004" name="Plant Physiol.">
        <title>Functional analysis of the tandem-duplicated P450 genes SPS/BUS/CYP79F1 and CYP79F2 in glucosinolate biosynthesis and plant development by Ds transposition-generated double mutants.</title>
        <authorList>
            <person name="Tantikanjana T."/>
            <person name="Mikkelsen M.D."/>
            <person name="Hussain M."/>
            <person name="Halkier B.A."/>
            <person name="Sundaresan V."/>
        </authorList>
    </citation>
    <scope>FUNCTION</scope>
    <source>
        <strain>cv. Wassilewskija</strain>
    </source>
</reference>
<feature type="chain" id="PRO_0000315843" description="Dihomomethionine N-hydroxylase">
    <location>
        <begin position="1"/>
        <end position="538"/>
    </location>
</feature>
<feature type="transmembrane region" description="Helical" evidence="2">
    <location>
        <begin position="8"/>
        <end position="28"/>
    </location>
</feature>
<feature type="splice variant" id="VSP_030739" description="In isoform 2." evidence="8">
    <original>SHIHVCR</original>
    <variation>KKKKKKR</variation>
    <location>
        <begin position="417"/>
        <end position="423"/>
    </location>
</feature>
<feature type="splice variant" id="VSP_030740" description="In isoform 2." evidence="8">
    <location>
        <begin position="424"/>
        <end position="538"/>
    </location>
</feature>
<feature type="sequence variant" description="In strain: cv. Ag-0, cv. Br-0, cv. C24, cv. Ct-1, cv. Edi-0, cv. Kas-1, cv. Kin-0, cv. Landsberg erecta, cv. Ll-0, cv. Lz-0, cv. Ms-0, cv. Mt-0, cv. Nd-1, cv. Nok-3, cv. Oy-0, cv. Sorbo, cv. Van-0, cv. Wa-1 and cv. Wassilewskija.">
    <original>C</original>
    <variation>R</variation>
    <location>
        <position position="43"/>
    </location>
</feature>
<feature type="sequence variant" description="In strain: cv. Se-0.">
    <original>A</original>
    <variation>G</variation>
    <location>
        <position position="83"/>
    </location>
</feature>
<feature type="sequence variant" description="In strain: cv. Br-0 and cv. Mt-0.">
    <original>I</original>
    <variation>T</variation>
    <location>
        <position position="120"/>
    </location>
</feature>
<feature type="sequence variant" description="In strain: cv. Ag-0, cv. Cvi-1, cv. Edi-0, cv. Ll-0 and cv. Nok-3.">
    <original>V</original>
    <variation>F</variation>
    <location>
        <position position="154"/>
    </location>
</feature>
<feature type="sequence variant" description="In strain: cv. Ag-0, cv. Br-0, cv. Cvi-1, cv. Edi-0, cv. Ll-0, cv. Lz-0, cv. Mt-0, cv. Nok-3 and cv. Van-0.">
    <original>K</original>
    <variation>N</variation>
    <location>
        <position position="158"/>
    </location>
</feature>
<feature type="sequence variant" description="In strain: cv. Nd-1.">
    <original>M</original>
    <variation>I</variation>
    <location>
        <position position="159"/>
    </location>
</feature>
<feature type="sequence variant" description="In strain: cv. Lz-0 and cv. Van-0.">
    <original>E</original>
    <variation>K</variation>
    <location>
        <position position="161"/>
    </location>
</feature>
<feature type="sequence variant" description="In strain: cv. Kin-0.">
    <original>R</original>
    <variation>W</variation>
    <location>
        <position position="192"/>
    </location>
</feature>
<feature type="sequence variant" description="In strain: cv. Ll-0.">
    <original>G</original>
    <variation>V</variation>
    <location>
        <position position="222"/>
    </location>
</feature>
<sequence>MMSFTTSLPYPFHILLVFILSMASITLLGRILSRPTKTKDRSCQLPPGPPGWPILGNLPELFMTRPRSKYFRLAMKELKTDIACFNFAGIRAITINSDEIAREAFRERDADLADRPQLFIMETIGDNYKSMGISPYGEQFMKMKRVITTEIMSVKTLKMLEAARTIEADNLIAYVHSMYQRSETVDVRELSRVYGYAVTMRMLFGRRHVTKENVFSDDGRLGNAEKHHLEVIFNTLNCLPSFSPADYVERWLRGWNVDGQEKRVTENCNIVRSYNNPIIDERVQLWREEGGKAAVEDWLDTFITLKDQNGKYLVTPDEIKAQCVEFCIAAIDNPANNMEWTLGEMLKNPEILRKALKELDEVVGRDRLVQESDIPNLNYLKACCRETFRIHPSAHYVPSHLARQDTTLGGYFIPKGSHIHVCRPGLGRNPKIWKDPLVYKPERHLQGDGITKEVTLVETEMRFVSFSTGRRGCIGVKVGTIMMVMLLARFLQGFNWKLHQDFGPLSLEEDDASLLMAKPLHLSVEPRLAPNLYPKFRP</sequence>
<evidence type="ECO:0000250" key="1"/>
<evidence type="ECO:0000255" key="2"/>
<evidence type="ECO:0000269" key="3">
    <source>
    </source>
</evidence>
<evidence type="ECO:0000269" key="4">
    <source>
    </source>
</evidence>
<evidence type="ECO:0000269" key="5">
    <source>
    </source>
</evidence>
<evidence type="ECO:0000269" key="6">
    <source>
    </source>
</evidence>
<evidence type="ECO:0000269" key="7">
    <source>
    </source>
</evidence>
<evidence type="ECO:0000305" key="8"/>
<comment type="function">
    <text evidence="3 4 7">Catalyzes the conversion of the short chain elongated methionines di-, tri-, and tetrahomomethionine to their respective aldoximes 5-methylthiopentanaldoxime, 6-methylthiohexanaldoxime, and 7-methylheptanaldoxime.</text>
</comment>
<comment type="catalytic activity">
    <reaction evidence="3 6">
        <text>an L-polyhomomethionine + 2 reduced [NADPH--hemoprotein reductase] + 2 O2 = an (E)-omega-(methylsulfanyl)-alkanal oxime + 2 oxidized [NADPH--hemoprotein reductase] + CO2 + 3 H2O + 2 H(+)</text>
        <dbReference type="Rhea" id="RHEA:51972"/>
        <dbReference type="Rhea" id="RHEA-COMP:11964"/>
        <dbReference type="Rhea" id="RHEA-COMP:11965"/>
        <dbReference type="Rhea" id="RHEA-COMP:13111"/>
        <dbReference type="Rhea" id="RHEA-COMP:13114"/>
        <dbReference type="ChEBI" id="CHEBI:15377"/>
        <dbReference type="ChEBI" id="CHEBI:15378"/>
        <dbReference type="ChEBI" id="CHEBI:15379"/>
        <dbReference type="ChEBI" id="CHEBI:16526"/>
        <dbReference type="ChEBI" id="CHEBI:57618"/>
        <dbReference type="ChEBI" id="CHEBI:58210"/>
        <dbReference type="ChEBI" id="CHEBI:134631"/>
        <dbReference type="ChEBI" id="CHEBI:134680"/>
        <dbReference type="EC" id="1.14.14.42"/>
    </reaction>
</comment>
<comment type="catalytic activity">
    <reaction evidence="3 6">
        <text>L-dihomomethionine + 2 reduced [NADPH--hemoprotein reductase] + 2 O2 = (E)-5-(methylsulfanyl)pentanal oxime + 2 oxidized [NADPH--hemoprotein reductase] + CO2 + 3 H2O + 2 H(+)</text>
        <dbReference type="Rhea" id="RHEA:32719"/>
        <dbReference type="Rhea" id="RHEA-COMP:11964"/>
        <dbReference type="Rhea" id="RHEA-COMP:11965"/>
        <dbReference type="ChEBI" id="CHEBI:15377"/>
        <dbReference type="ChEBI" id="CHEBI:15378"/>
        <dbReference type="ChEBI" id="CHEBI:15379"/>
        <dbReference type="ChEBI" id="CHEBI:16526"/>
        <dbReference type="ChEBI" id="CHEBI:57618"/>
        <dbReference type="ChEBI" id="CHEBI:58210"/>
        <dbReference type="ChEBI" id="CHEBI:134632"/>
        <dbReference type="ChEBI" id="CHEBI:134682"/>
        <dbReference type="EC" id="1.14.14.42"/>
    </reaction>
</comment>
<comment type="catalytic activity">
    <reaction evidence="3 6">
        <text>L-trihomomethionine + 2 reduced [NADPH--hemoprotein reductase] + 2 O2 = (E)-6-(methylsulfanyl)hexanal oxime + 2 oxidized [NADPH--hemoprotein reductase] + CO2 + 3 H2O + 2 H(+)</text>
        <dbReference type="Rhea" id="RHEA:32723"/>
        <dbReference type="Rhea" id="RHEA-COMP:11964"/>
        <dbReference type="Rhea" id="RHEA-COMP:11965"/>
        <dbReference type="ChEBI" id="CHEBI:15377"/>
        <dbReference type="ChEBI" id="CHEBI:15378"/>
        <dbReference type="ChEBI" id="CHEBI:15379"/>
        <dbReference type="ChEBI" id="CHEBI:16526"/>
        <dbReference type="ChEBI" id="CHEBI:57618"/>
        <dbReference type="ChEBI" id="CHEBI:58210"/>
        <dbReference type="ChEBI" id="CHEBI:134633"/>
        <dbReference type="ChEBI" id="CHEBI:134681"/>
        <dbReference type="EC" id="1.14.14.42"/>
    </reaction>
</comment>
<comment type="cofactor">
    <cofactor evidence="1">
        <name>heme</name>
        <dbReference type="ChEBI" id="CHEBI:30413"/>
    </cofactor>
</comment>
<comment type="biophysicochemical properties">
    <kinetics>
        <KM evidence="6">34 uM for dihomomethionine</KM>
        <KM evidence="6">37 uM for trihomomethionine</KM>
        <KM evidence="6">194 uM for tetrahomomethionine</KM>
        <KM evidence="6">216 uM for pentahomomethionine</KM>
        <KM evidence="6">74 uM for hexahomomethionine</KM>
    </kinetics>
</comment>
<comment type="subcellular location">
    <subcellularLocation>
        <location evidence="4">Endoplasmic reticulum membrane</location>
        <topology evidence="4">Single-pass membrane protein</topology>
    </subcellularLocation>
</comment>
<comment type="alternative products">
    <event type="alternative splicing"/>
    <isoform>
        <id>Q949U1-1</id>
        <name>1</name>
        <sequence type="displayed"/>
    </isoform>
    <isoform>
        <id>Q949U1-2</id>
        <name>2</name>
        <sequence type="described" ref="VSP_030739 VSP_030740"/>
    </isoform>
</comment>
<comment type="tissue specificity">
    <text evidence="3 4 6">Highly expressed in cotyledons, leaves, stems and siliques. Detected in flowers and lateral roots, but not in the main root. Expressed only in the vascular bundles in apical plant parts.</text>
</comment>
<comment type="induction">
    <text evidence="5">By methyl jasmonate.</text>
</comment>
<comment type="disruption phenotype">
    <text evidence="4 6">Plants have a bushy phenotype with crinkled leaves and retarded vascularization.</text>
</comment>
<comment type="similarity">
    <text evidence="8">Belongs to the cytochrome P450 family.</text>
</comment>
<comment type="sequence caution" evidence="8">
    <conflict type="erroneous initiation">
        <sequence resource="EMBL-CDS" id="AAD34693"/>
    </conflict>
    <text>Truncated N-terminus.</text>
</comment>
<name>C79F1_ARATH</name>
<protein>
    <recommendedName>
        <fullName>Dihomomethionine N-hydroxylase</fullName>
        <ecNumber evidence="3 6">1.14.14.42</ecNumber>
    </recommendedName>
    <alternativeName>
        <fullName>Cytochrome P450 79F1</fullName>
    </alternativeName>
    <alternativeName>
        <fullName>Protein BUSHY 1</fullName>
    </alternativeName>
    <alternativeName>
        <fullName>Protein SUPERSHOOT 1</fullName>
    </alternativeName>
    <alternativeName>
        <fullName>Trihomomethionine N-hydroxylase</fullName>
    </alternativeName>
</protein>
<gene>
    <name type="primary">CYP79F1</name>
    <name type="synonym">BUS1</name>
    <name type="synonym">SPS1</name>
    <name type="ordered locus">At1g16410</name>
    <name type="ORF">F3O9.21</name>
</gene>
<accession>Q949U1</accession>
<accession>A5YZH1</accession>
<accession>A5YZH3</accession>
<accession>A5YZH4</accession>
<accession>A5YZH6</accession>
<accession>A5YZH9</accession>
<accession>A5YZI0</accession>
<accession>A5YZI1</accession>
<accession>A5YZI6</accession>
<accession>A5YZI9</accession>
<accession>A5YZJ1</accession>
<accession>Q3EDB1</accession>
<accession>Q941N8</accession>
<accession>Q9SA40</accession>
<keyword id="KW-0025">Alternative splicing</keyword>
<keyword id="KW-0256">Endoplasmic reticulum</keyword>
<keyword id="KW-0349">Heme</keyword>
<keyword id="KW-0408">Iron</keyword>
<keyword id="KW-0472">Membrane</keyword>
<keyword id="KW-0479">Metal-binding</keyword>
<keyword id="KW-0503">Monooxygenase</keyword>
<keyword id="KW-0560">Oxidoreductase</keyword>
<keyword id="KW-1185">Reference proteome</keyword>
<keyword id="KW-0812">Transmembrane</keyword>
<keyword id="KW-1133">Transmembrane helix</keyword>
<dbReference type="EC" id="1.14.14.42" evidence="3 6"/>
<dbReference type="EMBL" id="AC006341">
    <property type="protein sequence ID" value="AAD34693.1"/>
    <property type="status" value="ALT_INIT"/>
    <property type="molecule type" value="Genomic_DNA"/>
</dbReference>
<dbReference type="EMBL" id="CP002684">
    <property type="protein sequence ID" value="AEE29447.1"/>
    <property type="molecule type" value="Genomic_DNA"/>
</dbReference>
<dbReference type="EMBL" id="CP002684">
    <property type="protein sequence ID" value="AEE29448.1"/>
    <property type="molecule type" value="Genomic_DNA"/>
</dbReference>
<dbReference type="EMBL" id="AY035021">
    <property type="protein sequence ID" value="AAK59526.1"/>
    <property type="molecule type" value="mRNA"/>
</dbReference>
<dbReference type="EMBL" id="AY050890">
    <property type="protein sequence ID" value="AAK92827.1"/>
    <property type="molecule type" value="mRNA"/>
</dbReference>
<dbReference type="EMBL" id="AY114074">
    <property type="protein sequence ID" value="AAM45122.1"/>
    <property type="molecule type" value="mRNA"/>
</dbReference>
<dbReference type="EMBL" id="EF598753">
    <property type="protein sequence ID" value="ABR09166.1"/>
    <property type="molecule type" value="Genomic_DNA"/>
</dbReference>
<dbReference type="EMBL" id="EF598754">
    <property type="protein sequence ID" value="ABR09167.1"/>
    <property type="molecule type" value="Genomic_DNA"/>
</dbReference>
<dbReference type="EMBL" id="EF598755">
    <property type="protein sequence ID" value="ABR09168.1"/>
    <property type="molecule type" value="Genomic_DNA"/>
</dbReference>
<dbReference type="EMBL" id="EF598756">
    <property type="protein sequence ID" value="ABR09169.1"/>
    <property type="molecule type" value="Genomic_DNA"/>
</dbReference>
<dbReference type="EMBL" id="EF598757">
    <property type="protein sequence ID" value="ABR09170.1"/>
    <property type="molecule type" value="Genomic_DNA"/>
</dbReference>
<dbReference type="EMBL" id="EF598758">
    <property type="protein sequence ID" value="ABR09171.1"/>
    <property type="molecule type" value="Genomic_DNA"/>
</dbReference>
<dbReference type="EMBL" id="EF598759">
    <property type="protein sequence ID" value="ABR09172.1"/>
    <property type="molecule type" value="Genomic_DNA"/>
</dbReference>
<dbReference type="EMBL" id="EF598760">
    <property type="protein sequence ID" value="ABR09173.1"/>
    <property type="molecule type" value="Genomic_DNA"/>
</dbReference>
<dbReference type="EMBL" id="EF598761">
    <property type="protein sequence ID" value="ABR09174.1"/>
    <property type="molecule type" value="Genomic_DNA"/>
</dbReference>
<dbReference type="EMBL" id="EF598762">
    <property type="protein sequence ID" value="ABR09175.1"/>
    <property type="molecule type" value="Genomic_DNA"/>
</dbReference>
<dbReference type="EMBL" id="EF598763">
    <property type="protein sequence ID" value="ABR09176.1"/>
    <property type="molecule type" value="Genomic_DNA"/>
</dbReference>
<dbReference type="EMBL" id="EF598764">
    <property type="protein sequence ID" value="ABR09177.1"/>
    <property type="molecule type" value="Genomic_DNA"/>
</dbReference>
<dbReference type="EMBL" id="EF598765">
    <property type="protein sequence ID" value="ABR09178.1"/>
    <property type="molecule type" value="Genomic_DNA"/>
</dbReference>
<dbReference type="EMBL" id="EF598766">
    <property type="protein sequence ID" value="ABR09179.1"/>
    <property type="molecule type" value="Genomic_DNA"/>
</dbReference>
<dbReference type="EMBL" id="EF598767">
    <property type="protein sequence ID" value="ABR09180.1"/>
    <property type="molecule type" value="Genomic_DNA"/>
</dbReference>
<dbReference type="EMBL" id="EF598768">
    <property type="protein sequence ID" value="ABR09181.1"/>
    <property type="molecule type" value="Genomic_DNA"/>
</dbReference>
<dbReference type="EMBL" id="EF598769">
    <property type="protein sequence ID" value="ABR09182.1"/>
    <property type="molecule type" value="Genomic_DNA"/>
</dbReference>
<dbReference type="EMBL" id="EF598770">
    <property type="protein sequence ID" value="ABR09183.1"/>
    <property type="molecule type" value="Genomic_DNA"/>
</dbReference>
<dbReference type="EMBL" id="EF598771">
    <property type="protein sequence ID" value="ABR09184.1"/>
    <property type="molecule type" value="Genomic_DNA"/>
</dbReference>
<dbReference type="EMBL" id="EF598772">
    <property type="protein sequence ID" value="ABR09185.1"/>
    <property type="molecule type" value="Genomic_DNA"/>
</dbReference>
<dbReference type="EMBL" id="EF598773">
    <property type="protein sequence ID" value="ABR09186.1"/>
    <property type="molecule type" value="Genomic_DNA"/>
</dbReference>
<dbReference type="EMBL" id="EF598774">
    <property type="protein sequence ID" value="ABR09187.1"/>
    <property type="molecule type" value="Genomic_DNA"/>
</dbReference>
<dbReference type="EMBL" id="EF598775">
    <property type="protein sequence ID" value="ABR09188.1"/>
    <property type="molecule type" value="Genomic_DNA"/>
</dbReference>
<dbReference type="EMBL" id="EF598776">
    <property type="protein sequence ID" value="ABR09189.1"/>
    <property type="molecule type" value="Genomic_DNA"/>
</dbReference>
<dbReference type="PIR" id="D86299">
    <property type="entry name" value="D86299"/>
</dbReference>
<dbReference type="RefSeq" id="NP_563996.2">
    <molecule id="Q949U1-1"/>
    <property type="nucleotide sequence ID" value="NM_101507.3"/>
</dbReference>
<dbReference type="RefSeq" id="NP_973840.1">
    <molecule id="Q949U1-2"/>
    <property type="nucleotide sequence ID" value="NM_202111.2"/>
</dbReference>
<dbReference type="SMR" id="Q949U1"/>
<dbReference type="BioGRID" id="23451">
    <property type="interactions" value="4"/>
</dbReference>
<dbReference type="FunCoup" id="Q949U1">
    <property type="interactions" value="93"/>
</dbReference>
<dbReference type="IntAct" id="Q949U1">
    <property type="interactions" value="3"/>
</dbReference>
<dbReference type="STRING" id="3702.Q949U1"/>
<dbReference type="PaxDb" id="3702-AT1G16410.1"/>
<dbReference type="ProteomicsDB" id="239120">
    <molecule id="Q949U1-1"/>
</dbReference>
<dbReference type="EnsemblPlants" id="AT1G16410.1">
    <molecule id="Q949U1-1"/>
    <property type="protein sequence ID" value="AT1G16410.1"/>
    <property type="gene ID" value="AT1G16410"/>
</dbReference>
<dbReference type="EnsemblPlants" id="AT1G16410.2">
    <molecule id="Q949U1-2"/>
    <property type="protein sequence ID" value="AT1G16410.2"/>
    <property type="gene ID" value="AT1G16410"/>
</dbReference>
<dbReference type="GeneID" id="838211"/>
<dbReference type="Gramene" id="AT1G16410.1">
    <molecule id="Q949U1-1"/>
    <property type="protein sequence ID" value="AT1G16410.1"/>
    <property type="gene ID" value="AT1G16410"/>
</dbReference>
<dbReference type="Gramene" id="AT1G16410.2">
    <molecule id="Q949U1-2"/>
    <property type="protein sequence ID" value="AT1G16410.2"/>
    <property type="gene ID" value="AT1G16410"/>
</dbReference>
<dbReference type="KEGG" id="ath:AT1G16410"/>
<dbReference type="Araport" id="AT1G16410"/>
<dbReference type="TAIR" id="AT1G16410">
    <property type="gene designation" value="CYP79F1"/>
</dbReference>
<dbReference type="eggNOG" id="KOG0156">
    <property type="taxonomic scope" value="Eukaryota"/>
</dbReference>
<dbReference type="HOGENOM" id="CLU_001570_4_0_1"/>
<dbReference type="InParanoid" id="Q949U1"/>
<dbReference type="OMA" id="PRHKYID"/>
<dbReference type="PhylomeDB" id="Q949U1"/>
<dbReference type="BioCyc" id="ARA:AT1G16410-MONOMER"/>
<dbReference type="BioCyc" id="MetaCyc:AT1G16410-MONOMER"/>
<dbReference type="BRENDA" id="1.14.14.42">
    <property type="organism ID" value="399"/>
</dbReference>
<dbReference type="SABIO-RK" id="Q949U1"/>
<dbReference type="PRO" id="PR:Q949U1"/>
<dbReference type="Proteomes" id="UP000006548">
    <property type="component" value="Chromosome 1"/>
</dbReference>
<dbReference type="ExpressionAtlas" id="Q949U1">
    <property type="expression patterns" value="baseline and differential"/>
</dbReference>
<dbReference type="GO" id="GO:0005783">
    <property type="term" value="C:endoplasmic reticulum"/>
    <property type="evidence" value="ECO:0000314"/>
    <property type="project" value="TAIR"/>
</dbReference>
<dbReference type="GO" id="GO:0005789">
    <property type="term" value="C:endoplasmic reticulum membrane"/>
    <property type="evidence" value="ECO:0007669"/>
    <property type="project" value="UniProtKB-SubCell"/>
</dbReference>
<dbReference type="GO" id="GO:0005634">
    <property type="term" value="C:nucleus"/>
    <property type="evidence" value="ECO:0007005"/>
    <property type="project" value="TAIR"/>
</dbReference>
<dbReference type="GO" id="GO:0020037">
    <property type="term" value="F:heme binding"/>
    <property type="evidence" value="ECO:0007669"/>
    <property type="project" value="InterPro"/>
</dbReference>
<dbReference type="GO" id="GO:0120526">
    <property type="term" value="F:homomethionine N-monooxygenase activity"/>
    <property type="evidence" value="ECO:0007669"/>
    <property type="project" value="UniProtKB-EC"/>
</dbReference>
<dbReference type="GO" id="GO:0005506">
    <property type="term" value="F:iron ion binding"/>
    <property type="evidence" value="ECO:0007669"/>
    <property type="project" value="InterPro"/>
</dbReference>
<dbReference type="GO" id="GO:0016709">
    <property type="term" value="F:oxidoreductase activity, acting on paired donors, with incorporation or reduction of molecular oxygen, NAD(P)H as one donor, and incorporation of one atom of oxygen"/>
    <property type="evidence" value="ECO:0000314"/>
    <property type="project" value="TAIR"/>
</dbReference>
<dbReference type="GO" id="GO:0019761">
    <property type="term" value="P:glucosinolate biosynthetic process"/>
    <property type="evidence" value="ECO:0000315"/>
    <property type="project" value="TAIR"/>
</dbReference>
<dbReference type="GO" id="GO:0009625">
    <property type="term" value="P:response to insect"/>
    <property type="evidence" value="ECO:0000270"/>
    <property type="project" value="TAIR"/>
</dbReference>
<dbReference type="CDD" id="cd20658">
    <property type="entry name" value="CYP79"/>
    <property type="match status" value="1"/>
</dbReference>
<dbReference type="Gene3D" id="1.10.630.10">
    <property type="entry name" value="Cytochrome P450"/>
    <property type="match status" value="1"/>
</dbReference>
<dbReference type="InterPro" id="IPR001128">
    <property type="entry name" value="Cyt_P450"/>
</dbReference>
<dbReference type="InterPro" id="IPR017972">
    <property type="entry name" value="Cyt_P450_CS"/>
</dbReference>
<dbReference type="InterPro" id="IPR002401">
    <property type="entry name" value="Cyt_P450_E_grp-I"/>
</dbReference>
<dbReference type="InterPro" id="IPR036396">
    <property type="entry name" value="Cyt_P450_sf"/>
</dbReference>
<dbReference type="PANTHER" id="PTHR47944:SF19">
    <property type="entry name" value="CYTOCHROME P450 77A4"/>
    <property type="match status" value="1"/>
</dbReference>
<dbReference type="PANTHER" id="PTHR47944">
    <property type="entry name" value="CYTOCHROME P450 98A9"/>
    <property type="match status" value="1"/>
</dbReference>
<dbReference type="Pfam" id="PF00067">
    <property type="entry name" value="p450"/>
    <property type="match status" value="1"/>
</dbReference>
<dbReference type="PRINTS" id="PR00463">
    <property type="entry name" value="EP450I"/>
</dbReference>
<dbReference type="SUPFAM" id="SSF48264">
    <property type="entry name" value="Cytochrome P450"/>
    <property type="match status" value="1"/>
</dbReference>
<dbReference type="PROSITE" id="PS00086">
    <property type="entry name" value="CYTOCHROME_P450"/>
    <property type="match status" value="1"/>
</dbReference>
<proteinExistence type="evidence at protein level"/>
<organism>
    <name type="scientific">Arabidopsis thaliana</name>
    <name type="common">Mouse-ear cress</name>
    <dbReference type="NCBI Taxonomy" id="3702"/>
    <lineage>
        <taxon>Eukaryota</taxon>
        <taxon>Viridiplantae</taxon>
        <taxon>Streptophyta</taxon>
        <taxon>Embryophyta</taxon>
        <taxon>Tracheophyta</taxon>
        <taxon>Spermatophyta</taxon>
        <taxon>Magnoliopsida</taxon>
        <taxon>eudicotyledons</taxon>
        <taxon>Gunneridae</taxon>
        <taxon>Pentapetalae</taxon>
        <taxon>rosids</taxon>
        <taxon>malvids</taxon>
        <taxon>Brassicales</taxon>
        <taxon>Brassicaceae</taxon>
        <taxon>Camelineae</taxon>
        <taxon>Arabidopsis</taxon>
    </lineage>
</organism>